<comment type="function">
    <text>Important modulator in the HLA class II restricted antigen presentation pathway by interaction with the HLA-DM molecule in B-cells. Modifies peptide exchange activity of HLA-DM.</text>
</comment>
<comment type="subunit">
    <text>Heterodimer of an alpha chain (DOA) and a beta chain (DOB). Forms a heterotetrameric complex with an HLA-DM molecule during intracellular transport in endosomal/lysosomal compartments in B-cells.</text>
</comment>
<comment type="interaction">
    <interactant intactId="EBI-10194851">
        <id>P06340</id>
    </interactant>
    <interactant intactId="EBI-307352">
        <id>Q04864</id>
        <label>REL</label>
    </interactant>
    <organismsDiffer>false</organismsDiffer>
    <experiments>3</experiments>
</comment>
<comment type="subcellular location">
    <subcellularLocation>
        <location>Endosome membrane</location>
        <topology>Single-pass type I membrane protein</topology>
    </subcellularLocation>
    <subcellularLocation>
        <location>Lysosome membrane</location>
        <topology>Single-pass type I membrane protein</topology>
    </subcellularLocation>
    <text>Complexes with HLA-DM molecule during intracellular transport and in endosomal/lysosomal compartments. Heterotetramerization is necessary to exit the ER.</text>
</comment>
<comment type="polymorphism">
    <text>The following alleles of DOA are known: DOA*01:01, DOA*01:02 and DOA*01:03. The sequence shown is that of DOA*01:01.</text>
</comment>
<comment type="similarity">
    <text evidence="3">Belongs to the MHC class II family.</text>
</comment>
<sequence length="250" mass="27599">MALRAGLVLGFHTLMTLLSPQEAGATKADHMGSYGPAFYQSYGASGQFTHEFDEEQLFSVDLKKSEAVWRLPEFGDFARFDPQGGLAGIAAIKAHLDILVERSNRSRAINVPPRVTVLPKSRVELGQPNILICIVDNIFPPVINITWLRNGQTVTEGVAQTSFYSQPDHLFRKFHYLPFVPSAEDVYDCQVEHWGLDAPLLRHWELQVPIPPPDAMETLVCALGLAIGLVGFLVGTVLIIMGTYVSSVPR</sequence>
<gene>
    <name type="primary">HLA-DOA</name>
    <name type="synonym">HLA-DNA</name>
    <name type="synonym">HLA-DZA</name>
</gene>
<keyword id="KW-0002">3D-structure</keyword>
<keyword id="KW-1064">Adaptive immunity</keyword>
<keyword id="KW-1015">Disulfide bond</keyword>
<keyword id="KW-0967">Endosome</keyword>
<keyword id="KW-0325">Glycoprotein</keyword>
<keyword id="KW-0391">Immunity</keyword>
<keyword id="KW-0458">Lysosome</keyword>
<keyword id="KW-0472">Membrane</keyword>
<keyword id="KW-0491">MHC II</keyword>
<keyword id="KW-1267">Proteomics identification</keyword>
<keyword id="KW-1185">Reference proteome</keyword>
<keyword id="KW-0732">Signal</keyword>
<keyword id="KW-0812">Transmembrane</keyword>
<keyword id="KW-1133">Transmembrane helix</keyword>
<evidence type="ECO:0000255" key="1"/>
<evidence type="ECO:0000255" key="2">
    <source>
        <dbReference type="PROSITE-ProRule" id="PRU00114"/>
    </source>
</evidence>
<evidence type="ECO:0000305" key="3"/>
<evidence type="ECO:0007829" key="4">
    <source>
        <dbReference type="PDB" id="4I0P"/>
    </source>
</evidence>
<proteinExistence type="evidence at protein level"/>
<accession>P06340</accession>
<accession>Q58HU0</accession>
<accession>Q58HU1</accession>
<accession>Q5STC7</accession>
<accession>Q9TQC6</accession>
<accession>Q9TQC7</accession>
<accession>Q9TQC8</accession>
<accession>Q9TQC9</accession>
<accession>Q9TQD0</accession>
<accession>Q9TQD1</accession>
<accession>Q9TQD2</accession>
<accession>Q9TQD3</accession>
<protein>
    <recommendedName>
        <fullName>HLA class II histocompatibility antigen, DO alpha chain</fullName>
    </recommendedName>
    <alternativeName>
        <fullName>MHC DN-alpha</fullName>
    </alternativeName>
    <alternativeName>
        <fullName>MHC DZ alpha</fullName>
    </alternativeName>
    <alternativeName>
        <fullName>MHC class II antigen DOA</fullName>
    </alternativeName>
</protein>
<dbReference type="EMBL" id="X02882">
    <property type="protein sequence ID" value="CAA26635.1"/>
    <property type="molecule type" value="Genomic_DNA"/>
</dbReference>
<dbReference type="EMBL" id="M26039">
    <property type="protein sequence ID" value="AAA59716.1"/>
    <property type="molecule type" value="mRNA"/>
</dbReference>
<dbReference type="EMBL" id="M31525">
    <property type="protein sequence ID" value="AAA60075.1"/>
    <property type="molecule type" value="mRNA"/>
</dbReference>
<dbReference type="EMBL" id="AY947479">
    <property type="protein sequence ID" value="AAX49509.1"/>
    <property type="molecule type" value="mRNA"/>
</dbReference>
<dbReference type="EMBL" id="AY947480">
    <property type="protein sequence ID" value="AAX49510.1"/>
    <property type="molecule type" value="mRNA"/>
</dbReference>
<dbReference type="EMBL" id="AY947481">
    <property type="protein sequence ID" value="AAX49511.1"/>
    <property type="molecule type" value="mRNA"/>
</dbReference>
<dbReference type="EMBL" id="AK290714">
    <property type="protein sequence ID" value="BAF83403.1"/>
    <property type="molecule type" value="mRNA"/>
</dbReference>
<dbReference type="EMBL" id="AK313551">
    <property type="protein sequence ID" value="BAG36327.1"/>
    <property type="molecule type" value="mRNA"/>
</dbReference>
<dbReference type="EMBL" id="Z81310">
    <property type="protein sequence ID" value="CAB03594.1"/>
    <property type="molecule type" value="Genomic_DNA"/>
</dbReference>
<dbReference type="EMBL" id="AL662845">
    <property type="status" value="NOT_ANNOTATED_CDS"/>
    <property type="molecule type" value="Genomic_DNA"/>
</dbReference>
<dbReference type="EMBL" id="AL645931">
    <property type="status" value="NOT_ANNOTATED_CDS"/>
    <property type="molecule type" value="Genomic_DNA"/>
</dbReference>
<dbReference type="EMBL" id="AL805913">
    <property type="status" value="NOT_ANNOTATED_CDS"/>
    <property type="molecule type" value="Genomic_DNA"/>
</dbReference>
<dbReference type="EMBL" id="BX005422">
    <property type="status" value="NOT_ANNOTATED_CDS"/>
    <property type="molecule type" value="Genomic_DNA"/>
</dbReference>
<dbReference type="EMBL" id="CR759829">
    <property type="status" value="NOT_ANNOTATED_CDS"/>
    <property type="molecule type" value="Genomic_DNA"/>
</dbReference>
<dbReference type="EMBL" id="CR936909">
    <property type="status" value="NOT_ANNOTATED_CDS"/>
    <property type="molecule type" value="Genomic_DNA"/>
</dbReference>
<dbReference type="EMBL" id="CR759795">
    <property type="status" value="NOT_ANNOTATED_CDS"/>
    <property type="molecule type" value="Genomic_DNA"/>
</dbReference>
<dbReference type="EMBL" id="CH471081">
    <property type="protein sequence ID" value="EAX03668.1"/>
    <property type="molecule type" value="Genomic_DNA"/>
</dbReference>
<dbReference type="EMBL" id="BC013183">
    <property type="protein sequence ID" value="AAH13183.1"/>
    <property type="molecule type" value="mRNA"/>
</dbReference>
<dbReference type="EMBL" id="AB005991">
    <property type="protein sequence ID" value="BAA81787.1"/>
    <property type="molecule type" value="Genomic_DNA"/>
</dbReference>
<dbReference type="EMBL" id="AB005992">
    <property type="protein sequence ID" value="BAA81788.1"/>
    <property type="molecule type" value="Genomic_DNA"/>
</dbReference>
<dbReference type="EMBL" id="AB005993">
    <property type="protein sequence ID" value="BAA81789.1"/>
    <property type="molecule type" value="Genomic_DNA"/>
</dbReference>
<dbReference type="EMBL" id="AB005994">
    <property type="protein sequence ID" value="BAA81790.1"/>
    <property type="molecule type" value="Genomic_DNA"/>
</dbReference>
<dbReference type="EMBL" id="AB005995">
    <property type="protein sequence ID" value="BAA81791.1"/>
    <property type="molecule type" value="Genomic_DNA"/>
</dbReference>
<dbReference type="EMBL" id="AB005996">
    <property type="protein sequence ID" value="BAA81792.1"/>
    <property type="molecule type" value="Genomic_DNA"/>
</dbReference>
<dbReference type="EMBL" id="AB005997">
    <property type="protein sequence ID" value="BAA81793.1"/>
    <property type="molecule type" value="Genomic_DNA"/>
</dbReference>
<dbReference type="EMBL" id="AB005998">
    <property type="protein sequence ID" value="BAA81794.1"/>
    <property type="molecule type" value="Genomic_DNA"/>
</dbReference>
<dbReference type="CCDS" id="CCDS4763.1"/>
<dbReference type="PIR" id="A02216">
    <property type="entry name" value="HLHUDZ"/>
</dbReference>
<dbReference type="RefSeq" id="NP_002110.1">
    <property type="nucleotide sequence ID" value="NM_002119.4"/>
</dbReference>
<dbReference type="PDB" id="4I0P">
    <property type="method" value="X-ray"/>
    <property type="resolution" value="3.20 A"/>
    <property type="chains" value="C/G=27-207"/>
</dbReference>
<dbReference type="PDBsum" id="4I0P"/>
<dbReference type="SMR" id="P06340"/>
<dbReference type="BioGRID" id="109356">
    <property type="interactions" value="4"/>
</dbReference>
<dbReference type="DIP" id="DIP-60116N"/>
<dbReference type="FunCoup" id="P06340">
    <property type="interactions" value="461"/>
</dbReference>
<dbReference type="IntAct" id="P06340">
    <property type="interactions" value="6"/>
</dbReference>
<dbReference type="STRING" id="9606.ENSP00000229829"/>
<dbReference type="GlyCosmos" id="P06340">
    <property type="glycosylation" value="2 sites, No reported glycans"/>
</dbReference>
<dbReference type="GlyGen" id="P06340">
    <property type="glycosylation" value="2 sites"/>
</dbReference>
<dbReference type="iPTMnet" id="P06340"/>
<dbReference type="PhosphoSitePlus" id="P06340"/>
<dbReference type="BioMuta" id="HLA-DOA"/>
<dbReference type="DMDM" id="122210"/>
<dbReference type="MassIVE" id="P06340"/>
<dbReference type="PaxDb" id="9606-ENSP00000229829"/>
<dbReference type="PeptideAtlas" id="P06340"/>
<dbReference type="ProteomicsDB" id="51896"/>
<dbReference type="Antibodypedia" id="28851">
    <property type="antibodies" value="151 antibodies from 25 providers"/>
</dbReference>
<dbReference type="DNASU" id="3111"/>
<dbReference type="Ensembl" id="ENST00000229829.7">
    <property type="protein sequence ID" value="ENSP00000229829.3"/>
    <property type="gene ID" value="ENSG00000204252.14"/>
</dbReference>
<dbReference type="Ensembl" id="ENST00000383226.4">
    <property type="protein sequence ID" value="ENSP00000372713.4"/>
    <property type="gene ID" value="ENSG00000206292.13"/>
</dbReference>
<dbReference type="Ensembl" id="ENST00000426070.2">
    <property type="protein sequence ID" value="ENSP00000401504.2"/>
    <property type="gene ID" value="ENSG00000231558.11"/>
</dbReference>
<dbReference type="Ensembl" id="ENST00000426685.2">
    <property type="protein sequence ID" value="ENSP00000397945.2"/>
    <property type="gene ID" value="ENSG00000232957.11"/>
</dbReference>
<dbReference type="Ensembl" id="ENST00000434335.2">
    <property type="protein sequence ID" value="ENSP00000416448.2"/>
    <property type="gene ID" value="ENSG00000232962.11"/>
</dbReference>
<dbReference type="Ensembl" id="ENST00000438987.2">
    <property type="protein sequence ID" value="ENSP00000395737.2"/>
    <property type="gene ID" value="ENSG00000230141.11"/>
</dbReference>
<dbReference type="Ensembl" id="ENST00000452598.2">
    <property type="protein sequence ID" value="ENSP00000398819.2"/>
    <property type="gene ID" value="ENSG00000235744.11"/>
</dbReference>
<dbReference type="GeneID" id="3111"/>
<dbReference type="KEGG" id="hsa:3111"/>
<dbReference type="MANE-Select" id="ENST00000229829.7">
    <property type="protein sequence ID" value="ENSP00000229829.3"/>
    <property type="RefSeq nucleotide sequence ID" value="NM_002119.4"/>
    <property type="RefSeq protein sequence ID" value="NP_002110.1"/>
</dbReference>
<dbReference type="AGR" id="HGNC:4936"/>
<dbReference type="CTD" id="3111"/>
<dbReference type="DisGeNET" id="3111"/>
<dbReference type="GeneCards" id="HLA-DOA"/>
<dbReference type="HGNC" id="HGNC:4936">
    <property type="gene designation" value="HLA-DOA"/>
</dbReference>
<dbReference type="HPA" id="ENSG00000204252">
    <property type="expression patterns" value="Tissue enhanced (lymphoid)"/>
</dbReference>
<dbReference type="MIM" id="142930">
    <property type="type" value="gene"/>
</dbReference>
<dbReference type="neXtProt" id="NX_P06340"/>
<dbReference type="OpenTargets" id="ENSG00000204252"/>
<dbReference type="PharmGKB" id="PA35060"/>
<dbReference type="VEuPathDB" id="HostDB:ENSG00000204252"/>
<dbReference type="eggNOG" id="ENOG502RXYJ">
    <property type="taxonomic scope" value="Eukaryota"/>
</dbReference>
<dbReference type="GeneTree" id="ENSGT00940000162112"/>
<dbReference type="HOGENOM" id="CLU_069380_0_0_1"/>
<dbReference type="InParanoid" id="P06340"/>
<dbReference type="OMA" id="HLFRKFC"/>
<dbReference type="OrthoDB" id="8925804at2759"/>
<dbReference type="PAN-GO" id="P06340">
    <property type="GO annotations" value="6 GO annotations based on evolutionary models"/>
</dbReference>
<dbReference type="PhylomeDB" id="P06340"/>
<dbReference type="TreeFam" id="TF333797"/>
<dbReference type="PathwayCommons" id="P06340"/>
<dbReference type="Reactome" id="R-HSA-2132295">
    <property type="pathway name" value="MHC class II antigen presentation"/>
</dbReference>
<dbReference type="SignaLink" id="P06340"/>
<dbReference type="SIGNOR" id="P06340"/>
<dbReference type="BioGRID-ORCS" id="3111">
    <property type="hits" value="17 hits in 1140 CRISPR screens"/>
</dbReference>
<dbReference type="EvolutionaryTrace" id="P06340"/>
<dbReference type="GeneWiki" id="HLA-DOA"/>
<dbReference type="GenomeRNAi" id="3111"/>
<dbReference type="Pharos" id="P06340">
    <property type="development level" value="Tbio"/>
</dbReference>
<dbReference type="PRO" id="PR:P06340"/>
<dbReference type="Proteomes" id="UP000005640">
    <property type="component" value="Chromosome 6"/>
</dbReference>
<dbReference type="RNAct" id="P06340">
    <property type="molecule type" value="protein"/>
</dbReference>
<dbReference type="Bgee" id="ENSG00000204252">
    <property type="expression patterns" value="Expressed in lymph node and 103 other cell types or tissues"/>
</dbReference>
<dbReference type="ExpressionAtlas" id="P06340">
    <property type="expression patterns" value="baseline and differential"/>
</dbReference>
<dbReference type="GO" id="GO:0031902">
    <property type="term" value="C:late endosome membrane"/>
    <property type="evidence" value="ECO:0000318"/>
    <property type="project" value="GO_Central"/>
</dbReference>
<dbReference type="GO" id="GO:0005765">
    <property type="term" value="C:lysosomal membrane"/>
    <property type="evidence" value="ECO:0000318"/>
    <property type="project" value="GO_Central"/>
</dbReference>
<dbReference type="GO" id="GO:0042613">
    <property type="term" value="C:MHC class II protein complex"/>
    <property type="evidence" value="ECO:0000314"/>
    <property type="project" value="UniProtKB"/>
</dbReference>
<dbReference type="GO" id="GO:0005886">
    <property type="term" value="C:plasma membrane"/>
    <property type="evidence" value="ECO:0000304"/>
    <property type="project" value="ProtInc"/>
</dbReference>
<dbReference type="GO" id="GO:0023026">
    <property type="term" value="F:MHC class II protein complex binding"/>
    <property type="evidence" value="ECO:0000314"/>
    <property type="project" value="UniProtKB"/>
</dbReference>
<dbReference type="GO" id="GO:0032395">
    <property type="term" value="F:MHC class II receptor activity"/>
    <property type="evidence" value="ECO:0000304"/>
    <property type="project" value="UniProtKB"/>
</dbReference>
<dbReference type="GO" id="GO:0042605">
    <property type="term" value="F:peptide antigen binding"/>
    <property type="evidence" value="ECO:0000318"/>
    <property type="project" value="GO_Central"/>
</dbReference>
<dbReference type="GO" id="GO:0002250">
    <property type="term" value="P:adaptive immune response"/>
    <property type="evidence" value="ECO:0007669"/>
    <property type="project" value="UniProtKB-KW"/>
</dbReference>
<dbReference type="GO" id="GO:0019886">
    <property type="term" value="P:antigen processing and presentation of exogenous peptide antigen via MHC class II"/>
    <property type="evidence" value="ECO:0000318"/>
    <property type="project" value="GO_Central"/>
</dbReference>
<dbReference type="GO" id="GO:0002587">
    <property type="term" value="P:negative regulation of antigen processing and presentation of peptide antigen via MHC class II"/>
    <property type="evidence" value="ECO:0000314"/>
    <property type="project" value="UniProtKB"/>
</dbReference>
<dbReference type="GO" id="GO:0002503">
    <property type="term" value="P:peptide antigen assembly with MHC class II protein complex"/>
    <property type="evidence" value="ECO:0000318"/>
    <property type="project" value="GO_Central"/>
</dbReference>
<dbReference type="GO" id="GO:0050778">
    <property type="term" value="P:positive regulation of immune response"/>
    <property type="evidence" value="ECO:0000318"/>
    <property type="project" value="GO_Central"/>
</dbReference>
<dbReference type="GO" id="GO:0050870">
    <property type="term" value="P:positive regulation of T cell activation"/>
    <property type="evidence" value="ECO:0000318"/>
    <property type="project" value="GO_Central"/>
</dbReference>
<dbReference type="GO" id="GO:0045580">
    <property type="term" value="P:regulation of T cell differentiation"/>
    <property type="evidence" value="ECO:0007669"/>
    <property type="project" value="Ensembl"/>
</dbReference>
<dbReference type="CDD" id="cd21004">
    <property type="entry name" value="IgC1_MHC_II_alpha_HLA_DO"/>
    <property type="match status" value="1"/>
</dbReference>
<dbReference type="FunFam" id="2.60.40.10:FF:000280">
    <property type="entry name" value="HLA class II histocompatibility antigen, DR alpha chain"/>
    <property type="match status" value="1"/>
</dbReference>
<dbReference type="FunFam" id="3.10.320.10:FF:000002">
    <property type="entry name" value="HLA class II histocompatibility antigen, DR alpha chain"/>
    <property type="match status" value="1"/>
</dbReference>
<dbReference type="Gene3D" id="3.10.320.10">
    <property type="entry name" value="Class II Histocompatibility Antigen, M Beta Chain, Chain B, domain 1"/>
    <property type="match status" value="1"/>
</dbReference>
<dbReference type="Gene3D" id="2.60.40.10">
    <property type="entry name" value="Immunoglobulins"/>
    <property type="match status" value="1"/>
</dbReference>
<dbReference type="InterPro" id="IPR007110">
    <property type="entry name" value="Ig-like_dom"/>
</dbReference>
<dbReference type="InterPro" id="IPR036179">
    <property type="entry name" value="Ig-like_dom_sf"/>
</dbReference>
<dbReference type="InterPro" id="IPR013783">
    <property type="entry name" value="Ig-like_fold"/>
</dbReference>
<dbReference type="InterPro" id="IPR003006">
    <property type="entry name" value="Ig/MHC_CS"/>
</dbReference>
<dbReference type="InterPro" id="IPR003597">
    <property type="entry name" value="Ig_C1-set"/>
</dbReference>
<dbReference type="InterPro" id="IPR050160">
    <property type="entry name" value="MHC/Immunoglobulin"/>
</dbReference>
<dbReference type="InterPro" id="IPR011162">
    <property type="entry name" value="MHC_I/II-like_Ag-recog"/>
</dbReference>
<dbReference type="InterPro" id="IPR014745">
    <property type="entry name" value="MHC_II_a/b_N"/>
</dbReference>
<dbReference type="InterPro" id="IPR001003">
    <property type="entry name" value="MHC_II_a_N"/>
</dbReference>
<dbReference type="PANTHER" id="PTHR19944:SF44">
    <property type="entry name" value="HLA CLASS II HISTOCOMPATIBILITY ANTIGEN, DO ALPHA CHAIN"/>
    <property type="match status" value="1"/>
</dbReference>
<dbReference type="PANTHER" id="PTHR19944">
    <property type="entry name" value="MHC CLASS II-RELATED"/>
    <property type="match status" value="1"/>
</dbReference>
<dbReference type="Pfam" id="PF07654">
    <property type="entry name" value="C1-set"/>
    <property type="match status" value="1"/>
</dbReference>
<dbReference type="Pfam" id="PF00993">
    <property type="entry name" value="MHC_II_alpha"/>
    <property type="match status" value="1"/>
</dbReference>
<dbReference type="SMART" id="SM00407">
    <property type="entry name" value="IGc1"/>
    <property type="match status" value="1"/>
</dbReference>
<dbReference type="SMART" id="SM00920">
    <property type="entry name" value="MHC_II_alpha"/>
    <property type="match status" value="1"/>
</dbReference>
<dbReference type="SUPFAM" id="SSF48726">
    <property type="entry name" value="Immunoglobulin"/>
    <property type="match status" value="1"/>
</dbReference>
<dbReference type="SUPFAM" id="SSF54452">
    <property type="entry name" value="MHC antigen-recognition domain"/>
    <property type="match status" value="1"/>
</dbReference>
<dbReference type="PROSITE" id="PS50835">
    <property type="entry name" value="IG_LIKE"/>
    <property type="match status" value="1"/>
</dbReference>
<dbReference type="PROSITE" id="PS00290">
    <property type="entry name" value="IG_MHC"/>
    <property type="match status" value="1"/>
</dbReference>
<name>DOA_HUMAN</name>
<feature type="signal peptide" evidence="1">
    <location>
        <begin position="1"/>
        <end position="25"/>
    </location>
</feature>
<feature type="chain" id="PRO_0000018962" description="HLA class II histocompatibility antigen, DO alpha chain">
    <location>
        <begin position="26"/>
        <end position="250"/>
    </location>
</feature>
<feature type="topological domain" description="Extracellular" evidence="1">
    <location>
        <begin position="26"/>
        <end position="217"/>
    </location>
</feature>
<feature type="transmembrane region" description="Helical" evidence="1">
    <location>
        <begin position="218"/>
        <end position="240"/>
    </location>
</feature>
<feature type="topological domain" description="Cytoplasmic" evidence="1">
    <location>
        <begin position="241"/>
        <end position="250"/>
    </location>
</feature>
<feature type="domain" description="Ig-like C1-type">
    <location>
        <begin position="113"/>
        <end position="205"/>
    </location>
</feature>
<feature type="region of interest" description="Alpha-1">
    <location>
        <begin position="26"/>
        <end position="110"/>
    </location>
</feature>
<feature type="region of interest" description="Alpha-2">
    <location>
        <begin position="111"/>
        <end position="204"/>
    </location>
</feature>
<feature type="region of interest" description="Connecting peptide">
    <location>
        <begin position="205"/>
        <end position="217"/>
    </location>
</feature>
<feature type="glycosylation site" description="N-linked (GlcNAc...) asparagine" evidence="1">
    <location>
        <position position="104"/>
    </location>
</feature>
<feature type="glycosylation site" description="N-linked (GlcNAc...) asparagine" evidence="1">
    <location>
        <position position="144"/>
    </location>
</feature>
<feature type="disulfide bond" evidence="2">
    <location>
        <begin position="133"/>
        <end position="189"/>
    </location>
</feature>
<feature type="sequence variant" id="VAR_058126" description="In allele DOA*01:03; dbSNP:rs41542323.">
    <original>L</original>
    <variation>V</variation>
    <location>
        <position position="99"/>
    </location>
</feature>
<feature type="sequence variant" id="VAR_058127" description="In allele DOA*01:02; dbSNP:rs11575906.">
    <original>R</original>
    <variation>C</variation>
    <location>
        <position position="105"/>
    </location>
</feature>
<feature type="strand" evidence="4">
    <location>
        <begin position="29"/>
        <end position="40"/>
    </location>
</feature>
<feature type="helix" evidence="4">
    <location>
        <begin position="42"/>
        <end position="44"/>
    </location>
</feature>
<feature type="strand" evidence="4">
    <location>
        <begin position="45"/>
        <end position="52"/>
    </location>
</feature>
<feature type="strand" evidence="4">
    <location>
        <begin position="55"/>
        <end position="61"/>
    </location>
</feature>
<feature type="turn" evidence="4">
    <location>
        <begin position="62"/>
        <end position="65"/>
    </location>
</feature>
<feature type="strand" evidence="4">
    <location>
        <begin position="66"/>
        <end position="71"/>
    </location>
</feature>
<feature type="helix" evidence="4">
    <location>
        <begin position="72"/>
        <end position="74"/>
    </location>
</feature>
<feature type="strand" evidence="4">
    <location>
        <begin position="77"/>
        <end position="80"/>
    </location>
</feature>
<feature type="helix" evidence="4">
    <location>
        <begin position="87"/>
        <end position="94"/>
    </location>
</feature>
<feature type="helix" evidence="4">
    <location>
        <begin position="96"/>
        <end position="102"/>
    </location>
</feature>
<feature type="strand" evidence="4">
    <location>
        <begin position="114"/>
        <end position="121"/>
    </location>
</feature>
<feature type="strand" evidence="4">
    <location>
        <begin position="129"/>
        <end position="141"/>
    </location>
</feature>
<feature type="strand" evidence="4">
    <location>
        <begin position="144"/>
        <end position="149"/>
    </location>
</feature>
<feature type="strand" evidence="4">
    <location>
        <begin position="152"/>
        <end position="154"/>
    </location>
</feature>
<feature type="strand" evidence="4">
    <location>
        <begin position="171"/>
        <end position="179"/>
    </location>
</feature>
<feature type="strand" evidence="4">
    <location>
        <begin position="187"/>
        <end position="192"/>
    </location>
</feature>
<feature type="strand" evidence="4">
    <location>
        <begin position="196"/>
        <end position="198"/>
    </location>
</feature>
<feature type="strand" evidence="4">
    <location>
        <begin position="200"/>
        <end position="204"/>
    </location>
</feature>
<reference key="1">
    <citation type="journal article" date="1985" name="EMBO J.">
        <title>The human HLA class II alpha chain gene DZ alpha is distinct from genes in the DP, DQ and DR subregions.</title>
        <authorList>
            <person name="Trowsdale J."/>
            <person name="Kelly A."/>
        </authorList>
    </citation>
    <scope>NUCLEOTIDE SEQUENCE [GENOMIC DNA] (ALLELE DOA*01:01)</scope>
</reference>
<reference key="2">
    <citation type="journal article" date="1989" name="Immunogenetics">
        <title>Human class II DNA and DOB genes display low sequence variability.</title>
        <authorList>
            <person name="Jonsson A.-K."/>
            <person name="Rask L."/>
        </authorList>
    </citation>
    <scope>NUCLEOTIDE SEQUENCE [MRNA] (ALLELE DOA*01:01)</scope>
</reference>
<reference key="3">
    <citation type="journal article" date="1990" name="Immunogenetics">
        <title>The HLA-DNA (DZA) gene is correctly expressed as a 1.1 kb mature mRNA transcript.</title>
        <authorList>
            <person name="Young J.A."/>
            <person name="Trowsdale J."/>
        </authorList>
    </citation>
    <scope>NUCLEOTIDE SEQUENCE [MRNA] (ALLELE DOA*01:01)</scope>
</reference>
<reference key="4">
    <citation type="journal article" date="2005" name="Tissue Antigens">
        <title>Identification of four novel HLA-DOA alleles, DOA*010106, DOA*0102, DOA*0103, and DOA*0104N, by sequence-based typing.</title>
        <authorList>
            <person name="Moon S.-M."/>
            <person name="Gu H."/>
            <person name="Ryu H.-J."/>
            <person name="Kim J.-J."/>
            <person name="Kim H.-T."/>
            <person name="Han B.G."/>
            <person name="Kimm K."/>
            <person name="Lee J.-K."/>
            <person name="Oh B."/>
        </authorList>
    </citation>
    <scope>NUCLEOTIDE SEQUENCE [MRNA] (ALLELES DOA*01:01; DOA*01:02 AND DOA*01:03)</scope>
</reference>
<reference key="5">
    <citation type="journal article" date="2004" name="Nat. Genet.">
        <title>Complete sequencing and characterization of 21,243 full-length human cDNAs.</title>
        <authorList>
            <person name="Ota T."/>
            <person name="Suzuki Y."/>
            <person name="Nishikawa T."/>
            <person name="Otsuki T."/>
            <person name="Sugiyama T."/>
            <person name="Irie R."/>
            <person name="Wakamatsu A."/>
            <person name="Hayashi K."/>
            <person name="Sato H."/>
            <person name="Nagai K."/>
            <person name="Kimura K."/>
            <person name="Makita H."/>
            <person name="Sekine M."/>
            <person name="Obayashi M."/>
            <person name="Nishi T."/>
            <person name="Shibahara T."/>
            <person name="Tanaka T."/>
            <person name="Ishii S."/>
            <person name="Yamamoto J."/>
            <person name="Saito K."/>
            <person name="Kawai Y."/>
            <person name="Isono Y."/>
            <person name="Nakamura Y."/>
            <person name="Nagahari K."/>
            <person name="Murakami K."/>
            <person name="Yasuda T."/>
            <person name="Iwayanagi T."/>
            <person name="Wagatsuma M."/>
            <person name="Shiratori A."/>
            <person name="Sudo H."/>
            <person name="Hosoiri T."/>
            <person name="Kaku Y."/>
            <person name="Kodaira H."/>
            <person name="Kondo H."/>
            <person name="Sugawara M."/>
            <person name="Takahashi M."/>
            <person name="Kanda K."/>
            <person name="Yokoi T."/>
            <person name="Furuya T."/>
            <person name="Kikkawa E."/>
            <person name="Omura Y."/>
            <person name="Abe K."/>
            <person name="Kamihara K."/>
            <person name="Katsuta N."/>
            <person name="Sato K."/>
            <person name="Tanikawa M."/>
            <person name="Yamazaki M."/>
            <person name="Ninomiya K."/>
            <person name="Ishibashi T."/>
            <person name="Yamashita H."/>
            <person name="Murakawa K."/>
            <person name="Fujimori K."/>
            <person name="Tanai H."/>
            <person name="Kimata M."/>
            <person name="Watanabe M."/>
            <person name="Hiraoka S."/>
            <person name="Chiba Y."/>
            <person name="Ishida S."/>
            <person name="Ono Y."/>
            <person name="Takiguchi S."/>
            <person name="Watanabe S."/>
            <person name="Yosida M."/>
            <person name="Hotuta T."/>
            <person name="Kusano J."/>
            <person name="Kanehori K."/>
            <person name="Takahashi-Fujii A."/>
            <person name="Hara H."/>
            <person name="Tanase T.-O."/>
            <person name="Nomura Y."/>
            <person name="Togiya S."/>
            <person name="Komai F."/>
            <person name="Hara R."/>
            <person name="Takeuchi K."/>
            <person name="Arita M."/>
            <person name="Imose N."/>
            <person name="Musashino K."/>
            <person name="Yuuki H."/>
            <person name="Oshima A."/>
            <person name="Sasaki N."/>
            <person name="Aotsuka S."/>
            <person name="Yoshikawa Y."/>
            <person name="Matsunawa H."/>
            <person name="Ichihara T."/>
            <person name="Shiohata N."/>
            <person name="Sano S."/>
            <person name="Moriya S."/>
            <person name="Momiyama H."/>
            <person name="Satoh N."/>
            <person name="Takami S."/>
            <person name="Terashima Y."/>
            <person name="Suzuki O."/>
            <person name="Nakagawa S."/>
            <person name="Senoh A."/>
            <person name="Mizoguchi H."/>
            <person name="Goto Y."/>
            <person name="Shimizu F."/>
            <person name="Wakebe H."/>
            <person name="Hishigaki H."/>
            <person name="Watanabe T."/>
            <person name="Sugiyama A."/>
            <person name="Takemoto M."/>
            <person name="Kawakami B."/>
            <person name="Yamazaki M."/>
            <person name="Watanabe K."/>
            <person name="Kumagai A."/>
            <person name="Itakura S."/>
            <person name="Fukuzumi Y."/>
            <person name="Fujimori Y."/>
            <person name="Komiyama M."/>
            <person name="Tashiro H."/>
            <person name="Tanigami A."/>
            <person name="Fujiwara T."/>
            <person name="Ono T."/>
            <person name="Yamada K."/>
            <person name="Fujii Y."/>
            <person name="Ozaki K."/>
            <person name="Hirao M."/>
            <person name="Ohmori Y."/>
            <person name="Kawabata A."/>
            <person name="Hikiji T."/>
            <person name="Kobatake N."/>
            <person name="Inagaki H."/>
            <person name="Ikema Y."/>
            <person name="Okamoto S."/>
            <person name="Okitani R."/>
            <person name="Kawakami T."/>
            <person name="Noguchi S."/>
            <person name="Itoh T."/>
            <person name="Shigeta K."/>
            <person name="Senba T."/>
            <person name="Matsumura K."/>
            <person name="Nakajima Y."/>
            <person name="Mizuno T."/>
            <person name="Morinaga M."/>
            <person name="Sasaki M."/>
            <person name="Togashi T."/>
            <person name="Oyama M."/>
            <person name="Hata H."/>
            <person name="Watanabe M."/>
            <person name="Komatsu T."/>
            <person name="Mizushima-Sugano J."/>
            <person name="Satoh T."/>
            <person name="Shirai Y."/>
            <person name="Takahashi Y."/>
            <person name="Nakagawa K."/>
            <person name="Okumura K."/>
            <person name="Nagase T."/>
            <person name="Nomura N."/>
            <person name="Kikuchi H."/>
            <person name="Masuho Y."/>
            <person name="Yamashita R."/>
            <person name="Nakai K."/>
            <person name="Yada T."/>
            <person name="Nakamura Y."/>
            <person name="Ohara O."/>
            <person name="Isogai T."/>
            <person name="Sugano S."/>
        </authorList>
    </citation>
    <scope>NUCLEOTIDE SEQUENCE [LARGE SCALE MRNA] (ALLELE DOA*01:01)</scope>
    <source>
        <tissue>Lung</tissue>
    </source>
</reference>
<reference key="6">
    <citation type="journal article" date="2003" name="Nature">
        <title>The DNA sequence and analysis of human chromosome 6.</title>
        <authorList>
            <person name="Mungall A.J."/>
            <person name="Palmer S.A."/>
            <person name="Sims S.K."/>
            <person name="Edwards C.A."/>
            <person name="Ashurst J.L."/>
            <person name="Wilming L."/>
            <person name="Jones M.C."/>
            <person name="Horton R."/>
            <person name="Hunt S.E."/>
            <person name="Scott C.E."/>
            <person name="Gilbert J.G.R."/>
            <person name="Clamp M.E."/>
            <person name="Bethel G."/>
            <person name="Milne S."/>
            <person name="Ainscough R."/>
            <person name="Almeida J.P."/>
            <person name="Ambrose K.D."/>
            <person name="Andrews T.D."/>
            <person name="Ashwell R.I.S."/>
            <person name="Babbage A.K."/>
            <person name="Bagguley C.L."/>
            <person name="Bailey J."/>
            <person name="Banerjee R."/>
            <person name="Barker D.J."/>
            <person name="Barlow K.F."/>
            <person name="Bates K."/>
            <person name="Beare D.M."/>
            <person name="Beasley H."/>
            <person name="Beasley O."/>
            <person name="Bird C.P."/>
            <person name="Blakey S.E."/>
            <person name="Bray-Allen S."/>
            <person name="Brook J."/>
            <person name="Brown A.J."/>
            <person name="Brown J.Y."/>
            <person name="Burford D.C."/>
            <person name="Burrill W."/>
            <person name="Burton J."/>
            <person name="Carder C."/>
            <person name="Carter N.P."/>
            <person name="Chapman J.C."/>
            <person name="Clark S.Y."/>
            <person name="Clark G."/>
            <person name="Clee C.M."/>
            <person name="Clegg S."/>
            <person name="Cobley V."/>
            <person name="Collier R.E."/>
            <person name="Collins J.E."/>
            <person name="Colman L.K."/>
            <person name="Corby N.R."/>
            <person name="Coville G.J."/>
            <person name="Culley K.M."/>
            <person name="Dhami P."/>
            <person name="Davies J."/>
            <person name="Dunn M."/>
            <person name="Earthrowl M.E."/>
            <person name="Ellington A.E."/>
            <person name="Evans K.A."/>
            <person name="Faulkner L."/>
            <person name="Francis M.D."/>
            <person name="Frankish A."/>
            <person name="Frankland J."/>
            <person name="French L."/>
            <person name="Garner P."/>
            <person name="Garnett J."/>
            <person name="Ghori M.J."/>
            <person name="Gilby L.M."/>
            <person name="Gillson C.J."/>
            <person name="Glithero R.J."/>
            <person name="Grafham D.V."/>
            <person name="Grant M."/>
            <person name="Gribble S."/>
            <person name="Griffiths C."/>
            <person name="Griffiths M.N.D."/>
            <person name="Hall R."/>
            <person name="Halls K.S."/>
            <person name="Hammond S."/>
            <person name="Harley J.L."/>
            <person name="Hart E.A."/>
            <person name="Heath P.D."/>
            <person name="Heathcott R."/>
            <person name="Holmes S.J."/>
            <person name="Howden P.J."/>
            <person name="Howe K.L."/>
            <person name="Howell G.R."/>
            <person name="Huckle E."/>
            <person name="Humphray S.J."/>
            <person name="Humphries M.D."/>
            <person name="Hunt A.R."/>
            <person name="Johnson C.M."/>
            <person name="Joy A.A."/>
            <person name="Kay M."/>
            <person name="Keenan S.J."/>
            <person name="Kimberley A.M."/>
            <person name="King A."/>
            <person name="Laird G.K."/>
            <person name="Langford C."/>
            <person name="Lawlor S."/>
            <person name="Leongamornlert D.A."/>
            <person name="Leversha M."/>
            <person name="Lloyd C.R."/>
            <person name="Lloyd D.M."/>
            <person name="Loveland J.E."/>
            <person name="Lovell J."/>
            <person name="Martin S."/>
            <person name="Mashreghi-Mohammadi M."/>
            <person name="Maslen G.L."/>
            <person name="Matthews L."/>
            <person name="McCann O.T."/>
            <person name="McLaren S.J."/>
            <person name="McLay K."/>
            <person name="McMurray A."/>
            <person name="Moore M.J.F."/>
            <person name="Mullikin J.C."/>
            <person name="Niblett D."/>
            <person name="Nickerson T."/>
            <person name="Novik K.L."/>
            <person name="Oliver K."/>
            <person name="Overton-Larty E.K."/>
            <person name="Parker A."/>
            <person name="Patel R."/>
            <person name="Pearce A.V."/>
            <person name="Peck A.I."/>
            <person name="Phillimore B.J.C.T."/>
            <person name="Phillips S."/>
            <person name="Plumb R.W."/>
            <person name="Porter K.M."/>
            <person name="Ramsey Y."/>
            <person name="Ranby S.A."/>
            <person name="Rice C.M."/>
            <person name="Ross M.T."/>
            <person name="Searle S.M."/>
            <person name="Sehra H.K."/>
            <person name="Sheridan E."/>
            <person name="Skuce C.D."/>
            <person name="Smith S."/>
            <person name="Smith M."/>
            <person name="Spraggon L."/>
            <person name="Squares S.L."/>
            <person name="Steward C.A."/>
            <person name="Sycamore N."/>
            <person name="Tamlyn-Hall G."/>
            <person name="Tester J."/>
            <person name="Theaker A.J."/>
            <person name="Thomas D.W."/>
            <person name="Thorpe A."/>
            <person name="Tracey A."/>
            <person name="Tromans A."/>
            <person name="Tubby B."/>
            <person name="Wall M."/>
            <person name="Wallis J.M."/>
            <person name="West A.P."/>
            <person name="White S.S."/>
            <person name="Whitehead S.L."/>
            <person name="Whittaker H."/>
            <person name="Wild A."/>
            <person name="Willey D.J."/>
            <person name="Wilmer T.E."/>
            <person name="Wood J.M."/>
            <person name="Wray P.W."/>
            <person name="Wyatt J.C."/>
            <person name="Young L."/>
            <person name="Younger R.M."/>
            <person name="Bentley D.R."/>
            <person name="Coulson A."/>
            <person name="Durbin R.M."/>
            <person name="Hubbard T."/>
            <person name="Sulston J.E."/>
            <person name="Dunham I."/>
            <person name="Rogers J."/>
            <person name="Beck S."/>
        </authorList>
    </citation>
    <scope>NUCLEOTIDE SEQUENCE [LARGE SCALE GENOMIC DNA] (ALLELE DOA*01:01)</scope>
</reference>
<reference key="7">
    <citation type="submission" date="2005-07" db="EMBL/GenBank/DDBJ databases">
        <authorList>
            <person name="Mural R.J."/>
            <person name="Istrail S."/>
            <person name="Sutton G.G."/>
            <person name="Florea L."/>
            <person name="Halpern A.L."/>
            <person name="Mobarry C.M."/>
            <person name="Lippert R."/>
            <person name="Walenz B."/>
            <person name="Shatkay H."/>
            <person name="Dew I."/>
            <person name="Miller J.R."/>
            <person name="Flanigan M.J."/>
            <person name="Edwards N.J."/>
            <person name="Bolanos R."/>
            <person name="Fasulo D."/>
            <person name="Halldorsson B.V."/>
            <person name="Hannenhalli S."/>
            <person name="Turner R."/>
            <person name="Yooseph S."/>
            <person name="Lu F."/>
            <person name="Nusskern D.R."/>
            <person name="Shue B.C."/>
            <person name="Zheng X.H."/>
            <person name="Zhong F."/>
            <person name="Delcher A.L."/>
            <person name="Huson D.H."/>
            <person name="Kravitz S.A."/>
            <person name="Mouchard L."/>
            <person name="Reinert K."/>
            <person name="Remington K.A."/>
            <person name="Clark A.G."/>
            <person name="Waterman M.S."/>
            <person name="Eichler E.E."/>
            <person name="Adams M.D."/>
            <person name="Hunkapiller M.W."/>
            <person name="Myers E.W."/>
            <person name="Venter J.C."/>
        </authorList>
    </citation>
    <scope>NUCLEOTIDE SEQUENCE [LARGE SCALE GENOMIC DNA] (ALLELE DOA*01:01)</scope>
</reference>
<reference key="8">
    <citation type="journal article" date="2004" name="Genome Res.">
        <title>The status, quality, and expansion of the NIH full-length cDNA project: the Mammalian Gene Collection (MGC).</title>
        <authorList>
            <consortium name="The MGC Project Team"/>
        </authorList>
    </citation>
    <scope>NUCLEOTIDE SEQUENCE [LARGE SCALE MRNA] (ALLELE DOA*01:01)</scope>
    <source>
        <tissue>Lymph</tissue>
    </source>
</reference>
<reference key="9">
    <citation type="journal article" date="1999" name="Tissue Antigens">
        <title>Limited polymorphism in the HLA-DOA gene.</title>
        <authorList>
            <person name="Naruse T.K."/>
            <person name="Kawata H."/>
            <person name="Anzai T."/>
            <person name="Takashige N."/>
            <person name="Kagiya M."/>
            <person name="Nose Y."/>
            <person name="Nabeya N."/>
            <person name="Isshiki G."/>
            <person name="Tatsumi N."/>
            <person name="Inoko H."/>
        </authorList>
    </citation>
    <scope>NUCLEOTIDE SEQUENCE [GENOMIC DNA] OF 29-250 (ALLELE DOA*01:01)</scope>
</reference>
<reference key="10">
    <citation type="journal article" date="2000" name="Annu. Rev. Immunol.">
        <title>Nonclassical MHC class II molecules.</title>
        <authorList>
            <person name="Alfonso C."/>
            <person name="Karlsson L."/>
        </authorList>
    </citation>
    <scope>REVIEW</scope>
</reference>
<organism>
    <name type="scientific">Homo sapiens</name>
    <name type="common">Human</name>
    <dbReference type="NCBI Taxonomy" id="9606"/>
    <lineage>
        <taxon>Eukaryota</taxon>
        <taxon>Metazoa</taxon>
        <taxon>Chordata</taxon>
        <taxon>Craniata</taxon>
        <taxon>Vertebrata</taxon>
        <taxon>Euteleostomi</taxon>
        <taxon>Mammalia</taxon>
        <taxon>Eutheria</taxon>
        <taxon>Euarchontoglires</taxon>
        <taxon>Primates</taxon>
        <taxon>Haplorrhini</taxon>
        <taxon>Catarrhini</taxon>
        <taxon>Hominidae</taxon>
        <taxon>Homo</taxon>
    </lineage>
</organism>